<protein>
    <recommendedName>
        <fullName evidence="1">Large ribosomal subunit protein bL32</fullName>
    </recommendedName>
    <alternativeName>
        <fullName evidence="3">50S ribosomal protein L32</fullName>
    </alternativeName>
</protein>
<gene>
    <name evidence="1" type="primary">rpmF</name>
    <name type="ordered locus">Shewana3_2562</name>
</gene>
<comment type="similarity">
    <text evidence="1">Belongs to the bacterial ribosomal protein bL32 family.</text>
</comment>
<accession>A0KYC0</accession>
<evidence type="ECO:0000255" key="1">
    <source>
        <dbReference type="HAMAP-Rule" id="MF_00340"/>
    </source>
</evidence>
<evidence type="ECO:0000256" key="2">
    <source>
        <dbReference type="SAM" id="MobiDB-lite"/>
    </source>
</evidence>
<evidence type="ECO:0000305" key="3"/>
<proteinExistence type="inferred from homology"/>
<name>RL32_SHESA</name>
<organism>
    <name type="scientific">Shewanella sp. (strain ANA-3)</name>
    <dbReference type="NCBI Taxonomy" id="94122"/>
    <lineage>
        <taxon>Bacteria</taxon>
        <taxon>Pseudomonadati</taxon>
        <taxon>Pseudomonadota</taxon>
        <taxon>Gammaproteobacteria</taxon>
        <taxon>Alteromonadales</taxon>
        <taxon>Shewanellaceae</taxon>
        <taxon>Shewanella</taxon>
    </lineage>
</organism>
<dbReference type="EMBL" id="CP000469">
    <property type="protein sequence ID" value="ABK48789.1"/>
    <property type="molecule type" value="Genomic_DNA"/>
</dbReference>
<dbReference type="RefSeq" id="WP_011072715.1">
    <property type="nucleotide sequence ID" value="NC_008577.1"/>
</dbReference>
<dbReference type="SMR" id="A0KYC0"/>
<dbReference type="STRING" id="94122.Shewana3_2562"/>
<dbReference type="GeneID" id="94728508"/>
<dbReference type="KEGG" id="shn:Shewana3_2562"/>
<dbReference type="eggNOG" id="COG0333">
    <property type="taxonomic scope" value="Bacteria"/>
</dbReference>
<dbReference type="HOGENOM" id="CLU_129084_2_1_6"/>
<dbReference type="OrthoDB" id="9801927at2"/>
<dbReference type="Proteomes" id="UP000002589">
    <property type="component" value="Chromosome"/>
</dbReference>
<dbReference type="GO" id="GO:0015934">
    <property type="term" value="C:large ribosomal subunit"/>
    <property type="evidence" value="ECO:0007669"/>
    <property type="project" value="InterPro"/>
</dbReference>
<dbReference type="GO" id="GO:0003735">
    <property type="term" value="F:structural constituent of ribosome"/>
    <property type="evidence" value="ECO:0007669"/>
    <property type="project" value="InterPro"/>
</dbReference>
<dbReference type="GO" id="GO:0006412">
    <property type="term" value="P:translation"/>
    <property type="evidence" value="ECO:0007669"/>
    <property type="project" value="UniProtKB-UniRule"/>
</dbReference>
<dbReference type="HAMAP" id="MF_00340">
    <property type="entry name" value="Ribosomal_bL32"/>
    <property type="match status" value="1"/>
</dbReference>
<dbReference type="InterPro" id="IPR002677">
    <property type="entry name" value="Ribosomal_bL32"/>
</dbReference>
<dbReference type="InterPro" id="IPR044957">
    <property type="entry name" value="Ribosomal_bL32_bact"/>
</dbReference>
<dbReference type="InterPro" id="IPR011332">
    <property type="entry name" value="Ribosomal_zn-bd"/>
</dbReference>
<dbReference type="NCBIfam" id="TIGR01031">
    <property type="entry name" value="rpmF_bact"/>
    <property type="match status" value="1"/>
</dbReference>
<dbReference type="PANTHER" id="PTHR35534">
    <property type="entry name" value="50S RIBOSOMAL PROTEIN L32"/>
    <property type="match status" value="1"/>
</dbReference>
<dbReference type="PANTHER" id="PTHR35534:SF1">
    <property type="entry name" value="LARGE RIBOSOMAL SUBUNIT PROTEIN BL32"/>
    <property type="match status" value="1"/>
</dbReference>
<dbReference type="Pfam" id="PF01783">
    <property type="entry name" value="Ribosomal_L32p"/>
    <property type="match status" value="1"/>
</dbReference>
<dbReference type="SUPFAM" id="SSF57829">
    <property type="entry name" value="Zn-binding ribosomal proteins"/>
    <property type="match status" value="1"/>
</dbReference>
<feature type="chain" id="PRO_0000296562" description="Large ribosomal subunit protein bL32">
    <location>
        <begin position="1"/>
        <end position="56"/>
    </location>
</feature>
<feature type="region of interest" description="Disordered" evidence="2">
    <location>
        <begin position="1"/>
        <end position="36"/>
    </location>
</feature>
<feature type="compositionally biased region" description="Basic residues" evidence="2">
    <location>
        <begin position="7"/>
        <end position="16"/>
    </location>
</feature>
<feature type="compositionally biased region" description="Polar residues" evidence="2">
    <location>
        <begin position="21"/>
        <end position="31"/>
    </location>
</feature>
<sequence length="56" mass="6285">MAVQQNKKSRSKRGMRRSHDALSTAQLSVDATSGEVHMRHNVTADGFYRGKKVINK</sequence>
<reference key="1">
    <citation type="submission" date="2006-09" db="EMBL/GenBank/DDBJ databases">
        <title>Complete sequence of chromosome 1 of Shewanella sp. ANA-3.</title>
        <authorList>
            <person name="Copeland A."/>
            <person name="Lucas S."/>
            <person name="Lapidus A."/>
            <person name="Barry K."/>
            <person name="Detter J.C."/>
            <person name="Glavina del Rio T."/>
            <person name="Hammon N."/>
            <person name="Israni S."/>
            <person name="Dalin E."/>
            <person name="Tice H."/>
            <person name="Pitluck S."/>
            <person name="Chertkov O."/>
            <person name="Brettin T."/>
            <person name="Bruce D."/>
            <person name="Han C."/>
            <person name="Tapia R."/>
            <person name="Gilna P."/>
            <person name="Schmutz J."/>
            <person name="Larimer F."/>
            <person name="Land M."/>
            <person name="Hauser L."/>
            <person name="Kyrpides N."/>
            <person name="Kim E."/>
            <person name="Newman D."/>
            <person name="Salticov C."/>
            <person name="Konstantinidis K."/>
            <person name="Klappenback J."/>
            <person name="Tiedje J."/>
            <person name="Richardson P."/>
        </authorList>
    </citation>
    <scope>NUCLEOTIDE SEQUENCE [LARGE SCALE GENOMIC DNA]</scope>
    <source>
        <strain>ANA-3</strain>
    </source>
</reference>
<keyword id="KW-0687">Ribonucleoprotein</keyword>
<keyword id="KW-0689">Ribosomal protein</keyword>